<keyword id="KW-0489">Methyltransferase</keyword>
<keyword id="KW-0949">S-adenosyl-L-methionine</keyword>
<keyword id="KW-0808">Transferase</keyword>
<keyword id="KW-0819">tRNA processing</keyword>
<feature type="chain" id="PRO_0000229212" description="tRNA (guanine-N(7)-)-methyltransferase">
    <location>
        <begin position="1"/>
        <end position="252"/>
    </location>
</feature>
<feature type="region of interest" description="Interaction with RNA" evidence="2">
    <location>
        <begin position="156"/>
        <end position="161"/>
    </location>
</feature>
<feature type="active site" evidence="1">
    <location>
        <position position="150"/>
    </location>
</feature>
<feature type="binding site" evidence="2">
    <location>
        <position position="75"/>
    </location>
    <ligand>
        <name>S-adenosyl-L-methionine</name>
        <dbReference type="ChEBI" id="CHEBI:59789"/>
    </ligand>
</feature>
<feature type="binding site" evidence="2">
    <location>
        <position position="100"/>
    </location>
    <ligand>
        <name>S-adenosyl-L-methionine</name>
        <dbReference type="ChEBI" id="CHEBI:59789"/>
    </ligand>
</feature>
<feature type="binding site" evidence="2">
    <location>
        <position position="127"/>
    </location>
    <ligand>
        <name>S-adenosyl-L-methionine</name>
        <dbReference type="ChEBI" id="CHEBI:59789"/>
    </ligand>
</feature>
<feature type="binding site" evidence="2">
    <location>
        <position position="150"/>
    </location>
    <ligand>
        <name>S-adenosyl-L-methionine</name>
        <dbReference type="ChEBI" id="CHEBI:59789"/>
    </ligand>
</feature>
<feature type="binding site" evidence="2">
    <location>
        <position position="154"/>
    </location>
    <ligand>
        <name>substrate</name>
    </ligand>
</feature>
<feature type="binding site" evidence="2">
    <location>
        <position position="186"/>
    </location>
    <ligand>
        <name>substrate</name>
    </ligand>
</feature>
<feature type="binding site" evidence="2">
    <location>
        <begin position="223"/>
        <end position="226"/>
    </location>
    <ligand>
        <name>substrate</name>
    </ligand>
</feature>
<sequence length="252" mass="28457">MTDPFTSDGAKMPPKPFTIEAGRRQVRSFVLRQGRFTSAQQRAFDELWPRFGLEYLGTPRDLAATFGRDTHKVLEIGFGNGAALRFAAQQDPSRDYIGIEVHAPGVGRLLNALEEDGSTHVRLYHHDAVEVLEHEIADGALDEVRIYFPDPWHKKRHNKRRLIQPAFAQLLVRKLRDGGRLHAATDWADYAEQMWDVLDATPGLVNRAGPRGHVERPAWRPQTHFETRGQKLGHGVWDLVYDRDPGVGSGDA</sequence>
<proteinExistence type="inferred from homology"/>
<name>TRMB_XANOM</name>
<accession>Q2P0J4</accession>
<comment type="function">
    <text evidence="2">Catalyzes the formation of N(7)-methylguanine at position 46 (m7G46) in tRNA.</text>
</comment>
<comment type="catalytic activity">
    <reaction evidence="2">
        <text>guanosine(46) in tRNA + S-adenosyl-L-methionine = N(7)-methylguanosine(46) in tRNA + S-adenosyl-L-homocysteine</text>
        <dbReference type="Rhea" id="RHEA:42708"/>
        <dbReference type="Rhea" id="RHEA-COMP:10188"/>
        <dbReference type="Rhea" id="RHEA-COMP:10189"/>
        <dbReference type="ChEBI" id="CHEBI:57856"/>
        <dbReference type="ChEBI" id="CHEBI:59789"/>
        <dbReference type="ChEBI" id="CHEBI:74269"/>
        <dbReference type="ChEBI" id="CHEBI:74480"/>
        <dbReference type="EC" id="2.1.1.33"/>
    </reaction>
</comment>
<comment type="pathway">
    <text evidence="2">tRNA modification; N(7)-methylguanine-tRNA biosynthesis.</text>
</comment>
<comment type="similarity">
    <text evidence="2">Belongs to the class I-like SAM-binding methyltransferase superfamily. TrmB family.</text>
</comment>
<protein>
    <recommendedName>
        <fullName evidence="2">tRNA (guanine-N(7)-)-methyltransferase</fullName>
        <ecNumber evidence="2">2.1.1.33</ecNumber>
    </recommendedName>
    <alternativeName>
        <fullName evidence="2">tRNA (guanine(46)-N(7))-methyltransferase</fullName>
    </alternativeName>
    <alternativeName>
        <fullName evidence="2">tRNA(m7G46)-methyltransferase</fullName>
    </alternativeName>
</protein>
<organism>
    <name type="scientific">Xanthomonas oryzae pv. oryzae (strain MAFF 311018)</name>
    <dbReference type="NCBI Taxonomy" id="342109"/>
    <lineage>
        <taxon>Bacteria</taxon>
        <taxon>Pseudomonadati</taxon>
        <taxon>Pseudomonadota</taxon>
        <taxon>Gammaproteobacteria</taxon>
        <taxon>Lysobacterales</taxon>
        <taxon>Lysobacteraceae</taxon>
        <taxon>Xanthomonas</taxon>
    </lineage>
</organism>
<dbReference type="EC" id="2.1.1.33" evidence="2"/>
<dbReference type="EMBL" id="AP008229">
    <property type="protein sequence ID" value="BAE69933.1"/>
    <property type="molecule type" value="Genomic_DNA"/>
</dbReference>
<dbReference type="RefSeq" id="WP_011259853.1">
    <property type="nucleotide sequence ID" value="NC_007705.1"/>
</dbReference>
<dbReference type="SMR" id="Q2P0J4"/>
<dbReference type="KEGG" id="xom:XOO3178"/>
<dbReference type="HOGENOM" id="CLU_050910_0_1_6"/>
<dbReference type="UniPathway" id="UPA00989"/>
<dbReference type="GO" id="GO:0043527">
    <property type="term" value="C:tRNA methyltransferase complex"/>
    <property type="evidence" value="ECO:0007669"/>
    <property type="project" value="TreeGrafter"/>
</dbReference>
<dbReference type="GO" id="GO:0008176">
    <property type="term" value="F:tRNA (guanine(46)-N7)-methyltransferase activity"/>
    <property type="evidence" value="ECO:0007669"/>
    <property type="project" value="UniProtKB-UniRule"/>
</dbReference>
<dbReference type="CDD" id="cd02440">
    <property type="entry name" value="AdoMet_MTases"/>
    <property type="match status" value="1"/>
</dbReference>
<dbReference type="FunFam" id="3.40.50.150:FF:000035">
    <property type="entry name" value="tRNA (guanine-N(7)-)-methyltransferase"/>
    <property type="match status" value="1"/>
</dbReference>
<dbReference type="Gene3D" id="3.40.50.150">
    <property type="entry name" value="Vaccinia Virus protein VP39"/>
    <property type="match status" value="1"/>
</dbReference>
<dbReference type="HAMAP" id="MF_01057">
    <property type="entry name" value="tRNA_methyltr_TrmB"/>
    <property type="match status" value="1"/>
</dbReference>
<dbReference type="InterPro" id="IPR029063">
    <property type="entry name" value="SAM-dependent_MTases_sf"/>
</dbReference>
<dbReference type="InterPro" id="IPR003358">
    <property type="entry name" value="tRNA_(Gua-N-7)_MeTrfase_Trmb"/>
</dbReference>
<dbReference type="InterPro" id="IPR055361">
    <property type="entry name" value="tRNA_methyltr_TrmB_bact"/>
</dbReference>
<dbReference type="NCBIfam" id="TIGR00091">
    <property type="entry name" value="tRNA (guanosine(46)-N7)-methyltransferase TrmB"/>
    <property type="match status" value="1"/>
</dbReference>
<dbReference type="PANTHER" id="PTHR23417">
    <property type="entry name" value="3-DEOXY-D-MANNO-OCTULOSONIC-ACID TRANSFERASE/TRNA GUANINE-N 7 - -METHYLTRANSFERASE"/>
    <property type="match status" value="1"/>
</dbReference>
<dbReference type="PANTHER" id="PTHR23417:SF14">
    <property type="entry name" value="PENTACOTRIPEPTIDE-REPEAT REGION OF PRORP DOMAIN-CONTAINING PROTEIN"/>
    <property type="match status" value="1"/>
</dbReference>
<dbReference type="Pfam" id="PF02390">
    <property type="entry name" value="Methyltransf_4"/>
    <property type="match status" value="1"/>
</dbReference>
<dbReference type="SUPFAM" id="SSF53335">
    <property type="entry name" value="S-adenosyl-L-methionine-dependent methyltransferases"/>
    <property type="match status" value="1"/>
</dbReference>
<dbReference type="PROSITE" id="PS51625">
    <property type="entry name" value="SAM_MT_TRMB"/>
    <property type="match status" value="1"/>
</dbReference>
<evidence type="ECO:0000250" key="1"/>
<evidence type="ECO:0000255" key="2">
    <source>
        <dbReference type="HAMAP-Rule" id="MF_01057"/>
    </source>
</evidence>
<reference key="1">
    <citation type="journal article" date="2005" name="Jpn. Agric. Res. Q.">
        <title>Genome sequence of Xanthomonas oryzae pv. oryzae suggests contribution of large numbers of effector genes and insertion sequences to its race diversity.</title>
        <authorList>
            <person name="Ochiai H."/>
            <person name="Inoue Y."/>
            <person name="Takeya M."/>
            <person name="Sasaki A."/>
            <person name="Kaku H."/>
        </authorList>
    </citation>
    <scope>NUCLEOTIDE SEQUENCE [LARGE SCALE GENOMIC DNA]</scope>
    <source>
        <strain>MAFF 311018</strain>
    </source>
</reference>
<gene>
    <name evidence="2" type="primary">trmB</name>
    <name type="ordered locus">XOO3178</name>
</gene>